<evidence type="ECO:0000255" key="1">
    <source>
        <dbReference type="HAMAP-Rule" id="MF_01810"/>
    </source>
</evidence>
<evidence type="ECO:0000256" key="2">
    <source>
        <dbReference type="SAM" id="MobiDB-lite"/>
    </source>
</evidence>
<keyword id="KW-0997">Cell inner membrane</keyword>
<keyword id="KW-1003">Cell membrane</keyword>
<keyword id="KW-0143">Chaperone</keyword>
<keyword id="KW-0472">Membrane</keyword>
<keyword id="KW-0653">Protein transport</keyword>
<keyword id="KW-1185">Reference proteome</keyword>
<keyword id="KW-0812">Transmembrane</keyword>
<keyword id="KW-1133">Transmembrane helix</keyword>
<keyword id="KW-0813">Transport</keyword>
<gene>
    <name evidence="1" type="primary">yidC</name>
    <name type="ordered locus">Z5197</name>
    <name type="ordered locus">ECs4640</name>
</gene>
<protein>
    <recommendedName>
        <fullName evidence="1">Membrane protein insertase YidC</fullName>
    </recommendedName>
    <alternativeName>
        <fullName evidence="1">Foldase YidC</fullName>
    </alternativeName>
    <alternativeName>
        <fullName evidence="1">Membrane integrase YidC</fullName>
    </alternativeName>
    <alternativeName>
        <fullName evidence="1">Membrane protein YidC</fullName>
    </alternativeName>
</protein>
<organism>
    <name type="scientific">Escherichia coli O157:H7</name>
    <dbReference type="NCBI Taxonomy" id="83334"/>
    <lineage>
        <taxon>Bacteria</taxon>
        <taxon>Pseudomonadati</taxon>
        <taxon>Pseudomonadota</taxon>
        <taxon>Gammaproteobacteria</taxon>
        <taxon>Enterobacterales</taxon>
        <taxon>Enterobacteriaceae</taxon>
        <taxon>Escherichia</taxon>
    </lineage>
</organism>
<proteinExistence type="inferred from homology"/>
<comment type="function">
    <text evidence="1">Required for the insertion and/or proper folding and/or complex formation of integral membrane proteins into the membrane. Involved in integration of membrane proteins that insert both dependently and independently of the Sec translocase complex, as well as at least some lipoproteins. Aids folding of multispanning membrane proteins.</text>
</comment>
<comment type="subunit">
    <text evidence="1">Interacts with the Sec translocase complex via SecD. Specifically interacts with transmembrane segments of nascent integral membrane proteins during membrane integration.</text>
</comment>
<comment type="subcellular location">
    <subcellularLocation>
        <location evidence="1">Cell inner membrane</location>
        <topology evidence="1">Multi-pass membrane protein</topology>
    </subcellularLocation>
</comment>
<comment type="similarity">
    <text evidence="1">Belongs to the OXA1/ALB3/YidC family. Type 1 subfamily.</text>
</comment>
<dbReference type="EMBL" id="AE005174">
    <property type="protein sequence ID" value="AAG58902.1"/>
    <property type="molecule type" value="Genomic_DNA"/>
</dbReference>
<dbReference type="EMBL" id="BA000007">
    <property type="protein sequence ID" value="BAB38063.1"/>
    <property type="molecule type" value="Genomic_DNA"/>
</dbReference>
<dbReference type="PIR" id="B86055">
    <property type="entry name" value="B86055"/>
</dbReference>
<dbReference type="PIR" id="H91208">
    <property type="entry name" value="H91208"/>
</dbReference>
<dbReference type="RefSeq" id="NP_312667.1">
    <property type="nucleotide sequence ID" value="NC_002695.1"/>
</dbReference>
<dbReference type="RefSeq" id="WP_000378258.1">
    <property type="nucleotide sequence ID" value="NZ_VOAI01000011.1"/>
</dbReference>
<dbReference type="SMR" id="P65625"/>
<dbReference type="STRING" id="155864.Z5197"/>
<dbReference type="GeneID" id="915399"/>
<dbReference type="GeneID" id="93778448"/>
<dbReference type="KEGG" id="ece:Z5197"/>
<dbReference type="KEGG" id="ecs:ECs_4640"/>
<dbReference type="PATRIC" id="fig|386585.9.peg.4850"/>
<dbReference type="eggNOG" id="COG0706">
    <property type="taxonomic scope" value="Bacteria"/>
</dbReference>
<dbReference type="HOGENOM" id="CLU_016535_3_0_6"/>
<dbReference type="OMA" id="YAEFGWV"/>
<dbReference type="Proteomes" id="UP000000558">
    <property type="component" value="Chromosome"/>
</dbReference>
<dbReference type="Proteomes" id="UP000002519">
    <property type="component" value="Chromosome"/>
</dbReference>
<dbReference type="GO" id="GO:0005886">
    <property type="term" value="C:plasma membrane"/>
    <property type="evidence" value="ECO:0007669"/>
    <property type="project" value="UniProtKB-SubCell"/>
</dbReference>
<dbReference type="GO" id="GO:0032977">
    <property type="term" value="F:membrane insertase activity"/>
    <property type="evidence" value="ECO:0007669"/>
    <property type="project" value="InterPro"/>
</dbReference>
<dbReference type="GO" id="GO:0051205">
    <property type="term" value="P:protein insertion into membrane"/>
    <property type="evidence" value="ECO:0007669"/>
    <property type="project" value="TreeGrafter"/>
</dbReference>
<dbReference type="GO" id="GO:0015031">
    <property type="term" value="P:protein transport"/>
    <property type="evidence" value="ECO:0007669"/>
    <property type="project" value="UniProtKB-KW"/>
</dbReference>
<dbReference type="CDD" id="cd20070">
    <property type="entry name" value="5TM_YidC_Alb3"/>
    <property type="match status" value="1"/>
</dbReference>
<dbReference type="CDD" id="cd19961">
    <property type="entry name" value="EcYidC-like_peri"/>
    <property type="match status" value="1"/>
</dbReference>
<dbReference type="FunFam" id="2.70.98.90:FF:000001">
    <property type="entry name" value="Membrane protein insertase YidC"/>
    <property type="match status" value="1"/>
</dbReference>
<dbReference type="Gene3D" id="2.70.98.90">
    <property type="match status" value="1"/>
</dbReference>
<dbReference type="HAMAP" id="MF_01810">
    <property type="entry name" value="YidC_type1"/>
    <property type="match status" value="1"/>
</dbReference>
<dbReference type="InterPro" id="IPR019998">
    <property type="entry name" value="Membr_insert_YidC"/>
</dbReference>
<dbReference type="InterPro" id="IPR028053">
    <property type="entry name" value="Membr_insert_YidC_N"/>
</dbReference>
<dbReference type="InterPro" id="IPR001708">
    <property type="entry name" value="YidC/ALB3/OXA1/COX18"/>
</dbReference>
<dbReference type="InterPro" id="IPR028055">
    <property type="entry name" value="YidC/Oxa/ALB_C"/>
</dbReference>
<dbReference type="InterPro" id="IPR047196">
    <property type="entry name" value="YidC_ALB_C"/>
</dbReference>
<dbReference type="InterPro" id="IPR038221">
    <property type="entry name" value="YidC_periplasmic_sf"/>
</dbReference>
<dbReference type="NCBIfam" id="NF002351">
    <property type="entry name" value="PRK01318.1-1"/>
    <property type="match status" value="1"/>
</dbReference>
<dbReference type="NCBIfam" id="NF002352">
    <property type="entry name" value="PRK01318.1-3"/>
    <property type="match status" value="1"/>
</dbReference>
<dbReference type="NCBIfam" id="NF002353">
    <property type="entry name" value="PRK01318.1-4"/>
    <property type="match status" value="1"/>
</dbReference>
<dbReference type="NCBIfam" id="TIGR03593">
    <property type="entry name" value="yidC_nterm"/>
    <property type="match status" value="1"/>
</dbReference>
<dbReference type="NCBIfam" id="TIGR03592">
    <property type="entry name" value="yidC_oxa1_cterm"/>
    <property type="match status" value="1"/>
</dbReference>
<dbReference type="PANTHER" id="PTHR12428:SF65">
    <property type="entry name" value="CYTOCHROME C OXIDASE ASSEMBLY PROTEIN COX18, MITOCHONDRIAL"/>
    <property type="match status" value="1"/>
</dbReference>
<dbReference type="PANTHER" id="PTHR12428">
    <property type="entry name" value="OXA1"/>
    <property type="match status" value="1"/>
</dbReference>
<dbReference type="Pfam" id="PF02096">
    <property type="entry name" value="60KD_IMP"/>
    <property type="match status" value="1"/>
</dbReference>
<dbReference type="Pfam" id="PF14849">
    <property type="entry name" value="YidC_periplas"/>
    <property type="match status" value="1"/>
</dbReference>
<dbReference type="PRINTS" id="PR00701">
    <property type="entry name" value="60KDINNERMP"/>
</dbReference>
<dbReference type="PRINTS" id="PR01900">
    <property type="entry name" value="YIDCPROTEIN"/>
</dbReference>
<sequence length="548" mass="61540">MDSQRNLLVIALLFVSFMIWQAWEQDKNPQPQAQQTTQTTTTAAGSAADQGVPASGQGKLISVKTDVLDLTINTRGGDVEQALLPAYPKELNSTQPFQLLETSPQFIYQAQSGLTGRDGPDNPANGPRPLYNVEKDAYVLAEGQNELQVPMTYTDAAGNTFTKTFVLKRGDYAVNVNYNVQNAGEKPLEISTFGQLKQSITLPPHLDTGSSNFALHTFRGAAYSTPDEKYEKYKFDTIADNENLNISSKGGWVAMLQQYFATAWIPHNDGTNNFYTANLGNGIAAIGYKSQPVLVQPGQTGAMNSTLWVGPEIQDKMAAVAPHLDLTVDYGWLWFISQPLFKLLKWIHSFVGNWGFSIIIITFIVRGIMYPLTKAQYTSMAKMRMLQPKIQAMRERLGDDKQRISQEMMALYKAEKVNPLGGCFPLLIQMPIFLALYYMLMGSVELRQAPFALWIHDLSAQDPYYILPILMGVTMFFIQKMSPTTVTDPMQQKIMTFMPVIFTVFFLWFPSGLVLYYIVSNLVTIIQQQLIYRGLEKRGLHSREKKKS</sequence>
<feature type="chain" id="PRO_0000124714" description="Membrane protein insertase YidC">
    <location>
        <begin position="1"/>
        <end position="548"/>
    </location>
</feature>
<feature type="transmembrane region" description="Helical" evidence="1">
    <location>
        <begin position="6"/>
        <end position="26"/>
    </location>
</feature>
<feature type="transmembrane region" description="Helical" evidence="1">
    <location>
        <begin position="350"/>
        <end position="370"/>
    </location>
</feature>
<feature type="transmembrane region" description="Helical" evidence="1">
    <location>
        <begin position="420"/>
        <end position="440"/>
    </location>
</feature>
<feature type="transmembrane region" description="Helical" evidence="1">
    <location>
        <begin position="458"/>
        <end position="478"/>
    </location>
</feature>
<feature type="transmembrane region" description="Helical" evidence="1">
    <location>
        <begin position="499"/>
        <end position="519"/>
    </location>
</feature>
<feature type="region of interest" description="Disordered" evidence="2">
    <location>
        <begin position="28"/>
        <end position="55"/>
    </location>
</feature>
<feature type="compositionally biased region" description="Low complexity" evidence="2">
    <location>
        <begin position="30"/>
        <end position="50"/>
    </location>
</feature>
<reference key="1">
    <citation type="journal article" date="2001" name="Nature">
        <title>Genome sequence of enterohaemorrhagic Escherichia coli O157:H7.</title>
        <authorList>
            <person name="Perna N.T."/>
            <person name="Plunkett G. III"/>
            <person name="Burland V."/>
            <person name="Mau B."/>
            <person name="Glasner J.D."/>
            <person name="Rose D.J."/>
            <person name="Mayhew G.F."/>
            <person name="Evans P.S."/>
            <person name="Gregor J."/>
            <person name="Kirkpatrick H.A."/>
            <person name="Posfai G."/>
            <person name="Hackett J."/>
            <person name="Klink S."/>
            <person name="Boutin A."/>
            <person name="Shao Y."/>
            <person name="Miller L."/>
            <person name="Grotbeck E.J."/>
            <person name="Davis N.W."/>
            <person name="Lim A."/>
            <person name="Dimalanta E.T."/>
            <person name="Potamousis K."/>
            <person name="Apodaca J."/>
            <person name="Anantharaman T.S."/>
            <person name="Lin J."/>
            <person name="Yen G."/>
            <person name="Schwartz D.C."/>
            <person name="Welch R.A."/>
            <person name="Blattner F.R."/>
        </authorList>
    </citation>
    <scope>NUCLEOTIDE SEQUENCE [LARGE SCALE GENOMIC DNA]</scope>
    <source>
        <strain>O157:H7 / EDL933 / ATCC 700927 / EHEC</strain>
    </source>
</reference>
<reference key="2">
    <citation type="journal article" date="2001" name="DNA Res.">
        <title>Complete genome sequence of enterohemorrhagic Escherichia coli O157:H7 and genomic comparison with a laboratory strain K-12.</title>
        <authorList>
            <person name="Hayashi T."/>
            <person name="Makino K."/>
            <person name="Ohnishi M."/>
            <person name="Kurokawa K."/>
            <person name="Ishii K."/>
            <person name="Yokoyama K."/>
            <person name="Han C.-G."/>
            <person name="Ohtsubo E."/>
            <person name="Nakayama K."/>
            <person name="Murata T."/>
            <person name="Tanaka M."/>
            <person name="Tobe T."/>
            <person name="Iida T."/>
            <person name="Takami H."/>
            <person name="Honda T."/>
            <person name="Sasakawa C."/>
            <person name="Ogasawara N."/>
            <person name="Yasunaga T."/>
            <person name="Kuhara S."/>
            <person name="Shiba T."/>
            <person name="Hattori M."/>
            <person name="Shinagawa H."/>
        </authorList>
    </citation>
    <scope>NUCLEOTIDE SEQUENCE [LARGE SCALE GENOMIC DNA]</scope>
    <source>
        <strain>O157:H7 / Sakai / RIMD 0509952 / EHEC</strain>
    </source>
</reference>
<accession>P65625</accession>
<accession>Q8FBV4</accession>
<accession>Q8XB42</accession>
<name>YIDC_ECO57</name>